<name>CAID_SALHS</name>
<proteinExistence type="inferred from homology"/>
<gene>
    <name evidence="1" type="primary">caiD</name>
    <name type="ordered locus">SeHA_C0074</name>
</gene>
<evidence type="ECO:0000255" key="1">
    <source>
        <dbReference type="HAMAP-Rule" id="MF_01051"/>
    </source>
</evidence>
<organism>
    <name type="scientific">Salmonella heidelberg (strain SL476)</name>
    <dbReference type="NCBI Taxonomy" id="454169"/>
    <lineage>
        <taxon>Bacteria</taxon>
        <taxon>Pseudomonadati</taxon>
        <taxon>Pseudomonadota</taxon>
        <taxon>Gammaproteobacteria</taxon>
        <taxon>Enterobacterales</taxon>
        <taxon>Enterobacteriaceae</taxon>
        <taxon>Salmonella</taxon>
    </lineage>
</organism>
<accession>B4TIG9</accession>
<comment type="function">
    <text evidence="1">Catalyzes the reversible dehydration of L-carnitinyl-CoA to crotonobetainyl-CoA.</text>
</comment>
<comment type="catalytic activity">
    <reaction evidence="1">
        <text>(R)-carnitinyl-CoA = crotonobetainyl-CoA + H2O</text>
        <dbReference type="Rhea" id="RHEA:28338"/>
        <dbReference type="ChEBI" id="CHEBI:15377"/>
        <dbReference type="ChEBI" id="CHEBI:60932"/>
        <dbReference type="ChEBI" id="CHEBI:60933"/>
        <dbReference type="EC" id="4.2.1.149"/>
    </reaction>
</comment>
<comment type="pathway">
    <text evidence="1">Amine and polyamine metabolism; carnitine metabolism.</text>
</comment>
<comment type="similarity">
    <text evidence="1">Belongs to the enoyl-CoA hydratase/isomerase family.</text>
</comment>
<keyword id="KW-0456">Lyase</keyword>
<sequence>MSESLHLTRNGPILEITLDRPKANAIDAKTSFAMGEAFLNFRDDPELRVAIITGGGEKFFSAGWDLKAAAEGEAPDADFGPGGFAGLTEIFDLDKPVIAAVNGYAFGGGFELALAADFIVCAENASFALPEAKLGIVPDSGGVLRLPKLLPPAIVNEMVMTGRRMSAEEALRWGVVNRVVSQSELMESARELAQQLVNSAPLAIAALKEIYRATSEMPVEEGYRYIRSGVLKHYPSVLHSEDALEGPQAFAEKRDPVWKGR</sequence>
<dbReference type="EC" id="4.2.1.149" evidence="1"/>
<dbReference type="EMBL" id="CP001120">
    <property type="protein sequence ID" value="ACF69676.1"/>
    <property type="molecule type" value="Genomic_DNA"/>
</dbReference>
<dbReference type="RefSeq" id="WP_000004385.1">
    <property type="nucleotide sequence ID" value="NC_011083.1"/>
</dbReference>
<dbReference type="SMR" id="B4TIG9"/>
<dbReference type="KEGG" id="seh:SeHA_C0074"/>
<dbReference type="HOGENOM" id="CLU_009834_7_6_6"/>
<dbReference type="UniPathway" id="UPA00117"/>
<dbReference type="Proteomes" id="UP000001866">
    <property type="component" value="Chromosome"/>
</dbReference>
<dbReference type="GO" id="GO:0016836">
    <property type="term" value="F:hydro-lyase activity"/>
    <property type="evidence" value="ECO:0007669"/>
    <property type="project" value="UniProtKB-UniRule"/>
</dbReference>
<dbReference type="GO" id="GO:0008735">
    <property type="term" value="F:L-carnitine CoA-transferase activity"/>
    <property type="evidence" value="ECO:0007669"/>
    <property type="project" value="RHEA"/>
</dbReference>
<dbReference type="GO" id="GO:0009437">
    <property type="term" value="P:carnitine metabolic process"/>
    <property type="evidence" value="ECO:0007669"/>
    <property type="project" value="UniProtKB-UniRule"/>
</dbReference>
<dbReference type="GO" id="GO:0006635">
    <property type="term" value="P:fatty acid beta-oxidation"/>
    <property type="evidence" value="ECO:0007669"/>
    <property type="project" value="TreeGrafter"/>
</dbReference>
<dbReference type="CDD" id="cd06558">
    <property type="entry name" value="crotonase-like"/>
    <property type="match status" value="1"/>
</dbReference>
<dbReference type="FunFam" id="1.10.12.10:FF:000005">
    <property type="entry name" value="Carnitinyl-CoA dehydratase"/>
    <property type="match status" value="1"/>
</dbReference>
<dbReference type="FunFam" id="3.90.226.10:FF:000009">
    <property type="entry name" value="Carnitinyl-CoA dehydratase"/>
    <property type="match status" value="1"/>
</dbReference>
<dbReference type="Gene3D" id="3.90.226.10">
    <property type="entry name" value="2-enoyl-CoA Hydratase, Chain A, domain 1"/>
    <property type="match status" value="1"/>
</dbReference>
<dbReference type="Gene3D" id="1.10.12.10">
    <property type="entry name" value="Lyase 2-enoyl-coa Hydratase, Chain A, domain 2"/>
    <property type="match status" value="1"/>
</dbReference>
<dbReference type="HAMAP" id="MF_01051">
    <property type="entry name" value="CaiD"/>
    <property type="match status" value="1"/>
</dbReference>
<dbReference type="InterPro" id="IPR022852">
    <property type="entry name" value="Carnitinyl_CoA_dehydratase"/>
</dbReference>
<dbReference type="InterPro" id="IPR029045">
    <property type="entry name" value="ClpP/crotonase-like_dom_sf"/>
</dbReference>
<dbReference type="InterPro" id="IPR018376">
    <property type="entry name" value="Enoyl-CoA_hyd/isom_CS"/>
</dbReference>
<dbReference type="InterPro" id="IPR001753">
    <property type="entry name" value="Enoyl-CoA_hydra/iso"/>
</dbReference>
<dbReference type="InterPro" id="IPR014748">
    <property type="entry name" value="Enoyl-CoA_hydra_C"/>
</dbReference>
<dbReference type="NCBIfam" id="NF002936">
    <property type="entry name" value="PRK03580.1"/>
    <property type="match status" value="1"/>
</dbReference>
<dbReference type="PANTHER" id="PTHR11941:SF54">
    <property type="entry name" value="ENOYL-COA HYDRATASE, MITOCHONDRIAL"/>
    <property type="match status" value="1"/>
</dbReference>
<dbReference type="PANTHER" id="PTHR11941">
    <property type="entry name" value="ENOYL-COA HYDRATASE-RELATED"/>
    <property type="match status" value="1"/>
</dbReference>
<dbReference type="Pfam" id="PF00378">
    <property type="entry name" value="ECH_1"/>
    <property type="match status" value="1"/>
</dbReference>
<dbReference type="SUPFAM" id="SSF52096">
    <property type="entry name" value="ClpP/crotonase"/>
    <property type="match status" value="1"/>
</dbReference>
<dbReference type="PROSITE" id="PS00166">
    <property type="entry name" value="ENOYL_COA_HYDRATASE"/>
    <property type="match status" value="1"/>
</dbReference>
<feature type="chain" id="PRO_1000136264" description="Carnitinyl-CoA dehydratase">
    <location>
        <begin position="1"/>
        <end position="261"/>
    </location>
</feature>
<feature type="active site" description="Nucleophile" evidence="1">
    <location>
        <position position="111"/>
    </location>
</feature>
<feature type="active site" description="Proton acceptor" evidence="1">
    <location>
        <position position="131"/>
    </location>
</feature>
<protein>
    <recommendedName>
        <fullName evidence="1">Carnitinyl-CoA dehydratase</fullName>
        <ecNumber evidence="1">4.2.1.149</ecNumber>
    </recommendedName>
    <alternativeName>
        <fullName evidence="1">Crotonobetainyl-CoA hydratase</fullName>
    </alternativeName>
</protein>
<reference key="1">
    <citation type="journal article" date="2011" name="J. Bacteriol.">
        <title>Comparative genomics of 28 Salmonella enterica isolates: evidence for CRISPR-mediated adaptive sublineage evolution.</title>
        <authorList>
            <person name="Fricke W.F."/>
            <person name="Mammel M.K."/>
            <person name="McDermott P.F."/>
            <person name="Tartera C."/>
            <person name="White D.G."/>
            <person name="Leclerc J.E."/>
            <person name="Ravel J."/>
            <person name="Cebula T.A."/>
        </authorList>
    </citation>
    <scope>NUCLEOTIDE SEQUENCE [LARGE SCALE GENOMIC DNA]</scope>
    <source>
        <strain>SL476</strain>
    </source>
</reference>